<accession>Q1CEF5</accession>
<accession>C4GY11</accession>
<reference key="1">
    <citation type="journal article" date="2006" name="J. Bacteriol.">
        <title>Complete genome sequence of Yersinia pestis strains Antiqua and Nepal516: evidence of gene reduction in an emerging pathogen.</title>
        <authorList>
            <person name="Chain P.S.G."/>
            <person name="Hu P."/>
            <person name="Malfatti S.A."/>
            <person name="Radnedge L."/>
            <person name="Larimer F."/>
            <person name="Vergez L.M."/>
            <person name="Worsham P."/>
            <person name="Chu M.C."/>
            <person name="Andersen G.L."/>
        </authorList>
    </citation>
    <scope>NUCLEOTIDE SEQUENCE [LARGE SCALE GENOMIC DNA]</scope>
    <source>
        <strain>Nepal516</strain>
    </source>
</reference>
<reference key="2">
    <citation type="submission" date="2009-04" db="EMBL/GenBank/DDBJ databases">
        <title>Yersinia pestis Nepal516A whole genome shotgun sequencing project.</title>
        <authorList>
            <person name="Plunkett G. III"/>
            <person name="Anderson B.D."/>
            <person name="Baumler D.J."/>
            <person name="Burland V."/>
            <person name="Cabot E.L."/>
            <person name="Glasner J.D."/>
            <person name="Mau B."/>
            <person name="Neeno-Eckwall E."/>
            <person name="Perna N.T."/>
            <person name="Munk A.C."/>
            <person name="Tapia R."/>
            <person name="Green L.D."/>
            <person name="Rogers Y.C."/>
            <person name="Detter J.C."/>
            <person name="Bruce D.C."/>
            <person name="Brettin T.S."/>
        </authorList>
    </citation>
    <scope>NUCLEOTIDE SEQUENCE [LARGE SCALE GENOMIC DNA]</scope>
    <source>
        <strain>Nepal516</strain>
    </source>
</reference>
<comment type="function">
    <text evidence="1">RNA chaperone that binds small regulatory RNA (sRNAs) and mRNAs to facilitate mRNA translational regulation in response to envelope stress, environmental stress and changes in metabolite concentrations. Also binds with high specificity to tRNAs.</text>
</comment>
<comment type="subunit">
    <text evidence="1">Homohexamer.</text>
</comment>
<comment type="similarity">
    <text evidence="1">Belongs to the Hfq family.</text>
</comment>
<sequence length="101" mass="11130">MAKGQSLQDPFLNALRRERVPVSIYLVNGIKLQGQVESFDQFVILLKNTVSQMVYKHAISTVVPSRPVSHHSNTPSGSTNNYHGSNPSAPQQPQQDSDDAE</sequence>
<protein>
    <recommendedName>
        <fullName evidence="1">RNA-binding protein Hfq</fullName>
    </recommendedName>
</protein>
<organism>
    <name type="scientific">Yersinia pestis bv. Antiqua (strain Nepal516)</name>
    <dbReference type="NCBI Taxonomy" id="377628"/>
    <lineage>
        <taxon>Bacteria</taxon>
        <taxon>Pseudomonadati</taxon>
        <taxon>Pseudomonadota</taxon>
        <taxon>Gammaproteobacteria</taxon>
        <taxon>Enterobacterales</taxon>
        <taxon>Yersiniaceae</taxon>
        <taxon>Yersinia</taxon>
    </lineage>
</organism>
<keyword id="KW-0694">RNA-binding</keyword>
<keyword id="KW-0346">Stress response</keyword>
<feature type="chain" id="PRO_0000265206" description="RNA-binding protein Hfq">
    <location>
        <begin position="1"/>
        <end position="101"/>
    </location>
</feature>
<feature type="domain" description="Sm" evidence="2">
    <location>
        <begin position="9"/>
        <end position="68"/>
    </location>
</feature>
<feature type="region of interest" description="Disordered" evidence="3">
    <location>
        <begin position="63"/>
        <end position="101"/>
    </location>
</feature>
<feature type="compositionally biased region" description="Polar residues" evidence="3">
    <location>
        <begin position="70"/>
        <end position="86"/>
    </location>
</feature>
<gene>
    <name evidence="1" type="primary">hfq</name>
    <name type="ordered locus">YPN_3298</name>
    <name type="ORF">YP516_3747</name>
</gene>
<name>HFQ_YERPN</name>
<evidence type="ECO:0000255" key="1">
    <source>
        <dbReference type="HAMAP-Rule" id="MF_00436"/>
    </source>
</evidence>
<evidence type="ECO:0000255" key="2">
    <source>
        <dbReference type="PROSITE-ProRule" id="PRU01346"/>
    </source>
</evidence>
<evidence type="ECO:0000256" key="3">
    <source>
        <dbReference type="SAM" id="MobiDB-lite"/>
    </source>
</evidence>
<proteinExistence type="inferred from homology"/>
<dbReference type="EMBL" id="CP000305">
    <property type="protein sequence ID" value="ABG19625.1"/>
    <property type="molecule type" value="Genomic_DNA"/>
</dbReference>
<dbReference type="EMBL" id="ACNQ01000017">
    <property type="protein sequence ID" value="EEO75811.1"/>
    <property type="molecule type" value="Genomic_DNA"/>
</dbReference>
<dbReference type="RefSeq" id="WP_002209151.1">
    <property type="nucleotide sequence ID" value="NZ_ACNQ01000017.1"/>
</dbReference>
<dbReference type="SMR" id="Q1CEF5"/>
<dbReference type="GeneID" id="58049160"/>
<dbReference type="KEGG" id="ypn:YPN_3298"/>
<dbReference type="HOGENOM" id="CLU_113688_2_1_6"/>
<dbReference type="Proteomes" id="UP000008936">
    <property type="component" value="Chromosome"/>
</dbReference>
<dbReference type="GO" id="GO:0005829">
    <property type="term" value="C:cytosol"/>
    <property type="evidence" value="ECO:0007669"/>
    <property type="project" value="TreeGrafter"/>
</dbReference>
<dbReference type="GO" id="GO:0003723">
    <property type="term" value="F:RNA binding"/>
    <property type="evidence" value="ECO:0007669"/>
    <property type="project" value="UniProtKB-UniRule"/>
</dbReference>
<dbReference type="GO" id="GO:0006355">
    <property type="term" value="P:regulation of DNA-templated transcription"/>
    <property type="evidence" value="ECO:0007669"/>
    <property type="project" value="InterPro"/>
</dbReference>
<dbReference type="GO" id="GO:0043487">
    <property type="term" value="P:regulation of RNA stability"/>
    <property type="evidence" value="ECO:0007669"/>
    <property type="project" value="TreeGrafter"/>
</dbReference>
<dbReference type="GO" id="GO:0045974">
    <property type="term" value="P:regulation of translation, ncRNA-mediated"/>
    <property type="evidence" value="ECO:0007669"/>
    <property type="project" value="TreeGrafter"/>
</dbReference>
<dbReference type="CDD" id="cd01716">
    <property type="entry name" value="Hfq"/>
    <property type="match status" value="1"/>
</dbReference>
<dbReference type="FunFam" id="2.30.30.100:FF:000001">
    <property type="entry name" value="RNA-binding protein Hfq"/>
    <property type="match status" value="1"/>
</dbReference>
<dbReference type="Gene3D" id="2.30.30.100">
    <property type="match status" value="1"/>
</dbReference>
<dbReference type="HAMAP" id="MF_00436">
    <property type="entry name" value="Hfq"/>
    <property type="match status" value="1"/>
</dbReference>
<dbReference type="InterPro" id="IPR005001">
    <property type="entry name" value="Hfq"/>
</dbReference>
<dbReference type="InterPro" id="IPR010920">
    <property type="entry name" value="LSM_dom_sf"/>
</dbReference>
<dbReference type="InterPro" id="IPR047575">
    <property type="entry name" value="Sm"/>
</dbReference>
<dbReference type="NCBIfam" id="TIGR02383">
    <property type="entry name" value="Hfq"/>
    <property type="match status" value="1"/>
</dbReference>
<dbReference type="NCBIfam" id="NF001602">
    <property type="entry name" value="PRK00395.1"/>
    <property type="match status" value="1"/>
</dbReference>
<dbReference type="PANTHER" id="PTHR34772">
    <property type="entry name" value="RNA-BINDING PROTEIN HFQ"/>
    <property type="match status" value="1"/>
</dbReference>
<dbReference type="PANTHER" id="PTHR34772:SF1">
    <property type="entry name" value="RNA-BINDING PROTEIN HFQ"/>
    <property type="match status" value="1"/>
</dbReference>
<dbReference type="Pfam" id="PF17209">
    <property type="entry name" value="Hfq"/>
    <property type="match status" value="1"/>
</dbReference>
<dbReference type="SUPFAM" id="SSF50182">
    <property type="entry name" value="Sm-like ribonucleoproteins"/>
    <property type="match status" value="1"/>
</dbReference>
<dbReference type="PROSITE" id="PS52002">
    <property type="entry name" value="SM"/>
    <property type="match status" value="1"/>
</dbReference>